<sequence length="186" mass="21879">MAVARARVLGVQWLQRASRNVMPLGARTASHMTKDMFPGPYPRTPEERAAAAKKYNMRVEDYEPYPDDGMGYGDYPKLPDRSQHERDPWYSWDQPGLRLNWGEPMHWHLDMYNRNRVDTSPTPISWHVMCMQLFGFLAFMIFMCWVGDVYPVYQPVGPKQYPYNNLYLERGGDPSKEPERVVHYEI</sequence>
<feature type="transit peptide" description="Mitochondrion" evidence="1">
    <location>
        <begin position="1"/>
        <end position="28"/>
    </location>
</feature>
<feature type="chain" id="PRO_0000251841" description="NADH dehydrogenase [ubiquinone] 1 beta subcomplex subunit 8, mitochondrial">
    <location>
        <begin position="29"/>
        <end position="186"/>
    </location>
</feature>
<feature type="transmembrane region" description="Helical" evidence="3">
    <location>
        <begin position="133"/>
        <end position="153"/>
    </location>
</feature>
<reference key="1">
    <citation type="journal article" date="2006" name="Gene">
        <title>Adaptive selection of mitochondrial complex I subunits during primate radiation.</title>
        <authorList>
            <person name="Mishmar D."/>
            <person name="Ruiz-Pesini E."/>
            <person name="Mondragon-Palomino M."/>
            <person name="Procaccio V."/>
            <person name="Gaut B."/>
            <person name="Wallace D.C."/>
        </authorList>
    </citation>
    <scope>NUCLEOTIDE SEQUENCE [MRNA]</scope>
</reference>
<name>NDUB8_GORGO</name>
<evidence type="ECO:0000250" key="1"/>
<evidence type="ECO:0000250" key="2">
    <source>
        <dbReference type="UniProtKB" id="O95169"/>
    </source>
</evidence>
<evidence type="ECO:0000255" key="3"/>
<evidence type="ECO:0000305" key="4"/>
<keyword id="KW-0249">Electron transport</keyword>
<keyword id="KW-0472">Membrane</keyword>
<keyword id="KW-0496">Mitochondrion</keyword>
<keyword id="KW-0999">Mitochondrion inner membrane</keyword>
<keyword id="KW-1185">Reference proteome</keyword>
<keyword id="KW-0679">Respiratory chain</keyword>
<keyword id="KW-0809">Transit peptide</keyword>
<keyword id="KW-0812">Transmembrane</keyword>
<keyword id="KW-1133">Transmembrane helix</keyword>
<keyword id="KW-0813">Transport</keyword>
<comment type="function">
    <text evidence="2">Accessory subunit of the mitochondrial membrane respiratory chain NADH dehydrogenase (Complex I), that is believed not to be involved in catalysis. Complex I functions in the transfer of electrons from NADH to the respiratory chain. The immediate electron acceptor for the enzyme is believed to be ubiquinone.</text>
</comment>
<comment type="subunit">
    <text evidence="2">Complex I is composed of 45 different subunits.</text>
</comment>
<comment type="subcellular location">
    <subcellularLocation>
        <location evidence="2">Mitochondrion inner membrane</location>
        <topology evidence="3">Single-pass membrane protein</topology>
        <orientation evidence="2">Matrix side</orientation>
    </subcellularLocation>
</comment>
<comment type="similarity">
    <text evidence="4">Belongs to the complex I NDUFB8 subunit family.</text>
</comment>
<protein>
    <recommendedName>
        <fullName>NADH dehydrogenase [ubiquinone] 1 beta subcomplex subunit 8, mitochondrial</fullName>
    </recommendedName>
    <alternativeName>
        <fullName>Complex I-ASHI</fullName>
        <shortName>CI-ASHI</shortName>
    </alternativeName>
    <alternativeName>
        <fullName>NADH-ubiquinone oxidoreductase ASHI subunit</fullName>
    </alternativeName>
</protein>
<proteinExistence type="evidence at transcript level"/>
<organism>
    <name type="scientific">Gorilla gorilla gorilla</name>
    <name type="common">Western lowland gorilla</name>
    <dbReference type="NCBI Taxonomy" id="9595"/>
    <lineage>
        <taxon>Eukaryota</taxon>
        <taxon>Metazoa</taxon>
        <taxon>Chordata</taxon>
        <taxon>Craniata</taxon>
        <taxon>Vertebrata</taxon>
        <taxon>Euteleostomi</taxon>
        <taxon>Mammalia</taxon>
        <taxon>Eutheria</taxon>
        <taxon>Euarchontoglires</taxon>
        <taxon>Primates</taxon>
        <taxon>Haplorrhini</taxon>
        <taxon>Catarrhini</taxon>
        <taxon>Hominidae</taxon>
        <taxon>Gorilla</taxon>
    </lineage>
</organism>
<dbReference type="EMBL" id="DQ885688">
    <property type="protein sequence ID" value="ABH12197.1"/>
    <property type="molecule type" value="mRNA"/>
</dbReference>
<dbReference type="RefSeq" id="NP_001266653.1">
    <property type="nucleotide sequence ID" value="NM_001279724.1"/>
</dbReference>
<dbReference type="SMR" id="Q0MQE6"/>
<dbReference type="FunCoup" id="Q0MQE6">
    <property type="interactions" value="1286"/>
</dbReference>
<dbReference type="STRING" id="9593.ENSGGOP00000047378"/>
<dbReference type="Ensembl" id="ENSGGOT00000066102.1">
    <property type="protein sequence ID" value="ENSGGOP00000047378.1"/>
    <property type="gene ID" value="ENSGGOG00000027239.2"/>
</dbReference>
<dbReference type="GeneID" id="101140954"/>
<dbReference type="KEGG" id="ggo:101140954"/>
<dbReference type="CTD" id="4714"/>
<dbReference type="eggNOG" id="KOG4040">
    <property type="taxonomic scope" value="Eukaryota"/>
</dbReference>
<dbReference type="GeneTree" id="ENSGT00390000000628"/>
<dbReference type="HOGENOM" id="CLU_108654_1_0_1"/>
<dbReference type="InParanoid" id="Q0MQE6"/>
<dbReference type="OMA" id="WHTMRNH"/>
<dbReference type="OrthoDB" id="545at9604"/>
<dbReference type="Proteomes" id="UP000001519">
    <property type="component" value="Chromosome 10"/>
</dbReference>
<dbReference type="Bgee" id="ENSGGOG00000027239">
    <property type="expression patterns" value="Expressed in heart and 5 other cell types or tissues"/>
</dbReference>
<dbReference type="GO" id="GO:0005743">
    <property type="term" value="C:mitochondrial inner membrane"/>
    <property type="evidence" value="ECO:0007669"/>
    <property type="project" value="UniProtKB-SubCell"/>
</dbReference>
<dbReference type="GO" id="GO:0045271">
    <property type="term" value="C:respiratory chain complex I"/>
    <property type="evidence" value="ECO:0000250"/>
    <property type="project" value="UniProtKB"/>
</dbReference>
<dbReference type="GO" id="GO:0006120">
    <property type="term" value="P:mitochondrial electron transport, NADH to ubiquinone"/>
    <property type="evidence" value="ECO:0007669"/>
    <property type="project" value="InterPro"/>
</dbReference>
<dbReference type="InterPro" id="IPR008699">
    <property type="entry name" value="NDUFB8"/>
</dbReference>
<dbReference type="InterPro" id="IPR016551">
    <property type="entry name" value="Ndufb8_metazoa"/>
</dbReference>
<dbReference type="PANTHER" id="PTHR12840:SF2">
    <property type="entry name" value="NADH DEHYDROGENASE [UBIQUINONE] 1 BETA SUBCOMPLEX SUBUNIT 8, MITOCHONDRIAL"/>
    <property type="match status" value="1"/>
</dbReference>
<dbReference type="PANTHER" id="PTHR12840">
    <property type="entry name" value="NADH-UBIQUINONE OXIDOREDUCTASE ASHI SUBUNIT"/>
    <property type="match status" value="1"/>
</dbReference>
<dbReference type="Pfam" id="PF05821">
    <property type="entry name" value="NDUF_B8"/>
    <property type="match status" value="1"/>
</dbReference>
<dbReference type="PIRSF" id="PIRSF009288">
    <property type="entry name" value="NDUB8"/>
    <property type="match status" value="1"/>
</dbReference>
<gene>
    <name type="primary">NDUFB8</name>
</gene>
<accession>Q0MQE6</accession>